<sequence length="410" mass="45032">MKNKGYPLRSSMDELSTKNDNEIDLEKGPLPEYNSEDGSTLPPYSEIWKYIKTVSEDSSTGPTETTNPNVERRQEFKDSHPNIYSLLRLLISVLAVIVVFFTAWVCVNPLEKSIFGKVAFFVTIGITCPILLITIFCFFETWTQAVAQCIKVTVIFLAQCVKVTAVFLAKCIKVTAVFLAKCVKVTAVFLAKCIKVTAVFLAKCVKVTAVFLAKCVKVIAVGLYNSKKDLVVTIWLAWVVICFILFGCVKDGRLNLNKALICSTCSISAALFFILLLVCIPIWTLKHMLFGLFQVLGVQSCVVIVTKGLMYLFDKHIDATGYEIEASSLFVIGNFLFFYEMERPGALKRMPKFIGNGIASFLGGLGNAFGGIGNAFGGIGNAIGRIGNAFRGANDNNDIPLGEMDVESEV</sequence>
<reference evidence="8" key="1">
    <citation type="journal article" date="2020" name="PLoS Genet.">
        <title>Dramatically diverse Schizosaccharomyces pombe wtf meiotic drivers all display high gamete-killing efficiency.</title>
        <authorList>
            <person name="Bravo Nunez M.A."/>
            <person name="Sabbarini I.M."/>
            <person name="Eickbush M.T."/>
            <person name="Liang Y."/>
            <person name="Lange J.J."/>
            <person name="Kent A.M."/>
            <person name="Zanders S.E."/>
        </authorList>
    </citation>
    <scope>NUCLEOTIDE SEQUENCE [GENOMIC DNA]</scope>
    <scope>FUNCTION (ISOFORM 1)</scope>
    <scope>ALTERNATIVE INITIATION (ISOFORMS 1 AND 2)</scope>
    <source>
        <strain evidence="8">FY29033</strain>
    </source>
</reference>
<proteinExistence type="inferred from homology"/>
<dbReference type="EMBL" id="MH837209">
    <property type="protein sequence ID" value="QBL54276.1"/>
    <property type="molecule type" value="Genomic_DNA"/>
</dbReference>
<dbReference type="VEuPathDB" id="FungiDB:SPCC162.04c"/>
<dbReference type="GO" id="GO:0072324">
    <property type="term" value="C:ascus epiplasm"/>
    <property type="evidence" value="ECO:0000305"/>
    <property type="project" value="UniProtKB"/>
</dbReference>
<dbReference type="GO" id="GO:0005737">
    <property type="term" value="C:cytoplasm"/>
    <property type="evidence" value="ECO:0000305"/>
    <property type="project" value="UniProtKB"/>
</dbReference>
<dbReference type="GO" id="GO:0005789">
    <property type="term" value="C:endoplasmic reticulum membrane"/>
    <property type="evidence" value="ECO:0007669"/>
    <property type="project" value="UniProtKB-SubCell"/>
</dbReference>
<dbReference type="GO" id="GO:0005774">
    <property type="term" value="C:vacuolar membrane"/>
    <property type="evidence" value="ECO:0007669"/>
    <property type="project" value="UniProtKB-SubCell"/>
</dbReference>
<dbReference type="GO" id="GO:0110134">
    <property type="term" value="P:meiotic drive"/>
    <property type="evidence" value="ECO:0000314"/>
    <property type="project" value="UniProtKB"/>
</dbReference>
<dbReference type="InterPro" id="IPR004982">
    <property type="entry name" value="WTF"/>
</dbReference>
<dbReference type="Pfam" id="PF03303">
    <property type="entry name" value="WTF"/>
    <property type="match status" value="2"/>
</dbReference>
<protein>
    <recommendedName>
        <fullName evidence="6">Meiotic driver wtf18</fullName>
    </recommendedName>
</protein>
<feature type="chain" id="PRO_0000452264" description="Meiotic driver wtf18">
    <location>
        <begin position="1"/>
        <end position="410"/>
    </location>
</feature>
<feature type="transmembrane region" description="Helical" evidence="3">
    <location>
        <begin position="89"/>
        <end position="109"/>
    </location>
</feature>
<feature type="transmembrane region" description="Helical" evidence="3">
    <location>
        <begin position="119"/>
        <end position="139"/>
    </location>
</feature>
<feature type="transmembrane region" description="Helical" evidence="3">
    <location>
        <begin position="149"/>
        <end position="169"/>
    </location>
</feature>
<feature type="transmembrane region" description="Helical" evidence="3">
    <location>
        <begin position="174"/>
        <end position="194"/>
    </location>
</feature>
<feature type="transmembrane region" description="Helical" evidence="3">
    <location>
        <begin position="204"/>
        <end position="224"/>
    </location>
</feature>
<feature type="transmembrane region" description="Helical" evidence="3">
    <location>
        <begin position="229"/>
        <end position="249"/>
    </location>
</feature>
<feature type="transmembrane region" description="Helical" evidence="3">
    <location>
        <begin position="265"/>
        <end position="285"/>
    </location>
</feature>
<feature type="transmembrane region" description="Helical" evidence="3">
    <location>
        <begin position="289"/>
        <end position="309"/>
    </location>
</feature>
<feature type="transmembrane region" description="Helical" evidence="3">
    <location>
        <begin position="319"/>
        <end position="339"/>
    </location>
</feature>
<feature type="transmembrane region" description="Helical" evidence="3">
    <location>
        <begin position="353"/>
        <end position="373"/>
    </location>
</feature>
<feature type="region of interest" description="Disordered" evidence="4">
    <location>
        <begin position="1"/>
        <end position="39"/>
    </location>
</feature>
<feature type="compositionally biased region" description="Basic and acidic residues" evidence="4">
    <location>
        <begin position="11"/>
        <end position="29"/>
    </location>
</feature>
<feature type="splice variant" id="VSP_060934" description="In isoform 2." evidence="5">
    <original>MKNKGYPLRSSMDELSTKNDNEIDLEKGPLPEYNSEDGSTLPPY</original>
    <variation>ML</variation>
    <location>
        <begin position="1"/>
        <end position="44"/>
    </location>
</feature>
<name>WTF18_SCHPM</name>
<gene>
    <name evidence="8" type="primary">wtf18</name>
</gene>
<keyword id="KW-0024">Alternative initiation</keyword>
<keyword id="KW-0963">Cytoplasm</keyword>
<keyword id="KW-0256">Endoplasmic reticulum</keyword>
<keyword id="KW-0472">Membrane</keyword>
<keyword id="KW-0800">Toxin</keyword>
<keyword id="KW-0812">Transmembrane</keyword>
<keyword id="KW-1133">Transmembrane helix</keyword>
<keyword id="KW-0926">Vacuole</keyword>
<evidence type="ECO:0000250" key="1">
    <source>
        <dbReference type="UniProtKB" id="A0A218N034"/>
    </source>
</evidence>
<evidence type="ECO:0000250" key="2">
    <source>
        <dbReference type="UniProtKB" id="O74420"/>
    </source>
</evidence>
<evidence type="ECO:0000255" key="3"/>
<evidence type="ECO:0000256" key="4">
    <source>
        <dbReference type="SAM" id="MobiDB-lite"/>
    </source>
</evidence>
<evidence type="ECO:0000269" key="5">
    <source>
    </source>
</evidence>
<evidence type="ECO:0000303" key="6">
    <source>
    </source>
</evidence>
<evidence type="ECO:0000305" key="7"/>
<evidence type="ECO:0000312" key="8">
    <source>
        <dbReference type="EMBL" id="QBL54276.1"/>
    </source>
</evidence>
<accession>A0A482ARC8</accession>
<organism evidence="8">
    <name type="scientific">Schizosaccharomyces pombe</name>
    <name type="common">Fission yeast</name>
    <dbReference type="NCBI Taxonomy" id="4896"/>
    <lineage>
        <taxon>Eukaryota</taxon>
        <taxon>Fungi</taxon>
        <taxon>Dikarya</taxon>
        <taxon>Ascomycota</taxon>
        <taxon>Taphrinomycotina</taxon>
        <taxon>Schizosaccharomycetes</taxon>
        <taxon>Schizosaccharomycetales</taxon>
        <taxon>Schizosaccharomycetaceae</taxon>
        <taxon>Schizosaccharomyces</taxon>
    </lineage>
</organism>
<comment type="function">
    <text evidence="5">Promotes unequal transmission of alleles from the parental zygote to progeny spores by acting as poison/antidote system where the poison and antidote proteins are produced from the same locus; the poison component is trans-acting and targets all spores within an ascus whereas the antidote component is spore-specific, leading to poisoning of all progeny that do not inherit the allele.</text>
</comment>
<comment type="function">
    <molecule>Isoform 1</molecule>
    <text evidence="1 5">Localizes isoform 2 to the vacuole thereby facilitating its degradation (By similarity). In addition to suppressing isoform 2, also suppresses S.pombe strain 972 wtf13 isoform 2 (PubMed:32032353).</text>
</comment>
<comment type="function">
    <molecule>Isoform 2</molecule>
    <text evidence="1">Forms toxic aggregates that disrupt spore maturation.</text>
</comment>
<comment type="subunit">
    <text evidence="1 2">Homomer (By similarity). Forms protein aggregates (By similarity). The two isoforms can interact with each other and with themselves (By similarity). High sequence similarity is required for their interaction (By similarity).</text>
</comment>
<comment type="subcellular location">
    <molecule>Isoform 1</molecule>
    <subcellularLocation>
        <location evidence="1 3">Spore membrane</location>
        <topology evidence="3">Multi-pass membrane protein</topology>
    </subcellularLocation>
    <subcellularLocation>
        <location evidence="1 3">Vacuole membrane</location>
        <topology evidence="3">Multi-pass membrane protein</topology>
    </subcellularLocation>
    <text evidence="1">Contained within spores expressing the isoform and localizes isoform 2 to the vacuole.</text>
</comment>
<comment type="subcellular location">
    <molecule>Isoform 2</molecule>
    <subcellularLocation>
        <location evidence="1">Ascus epiplasm</location>
    </subcellularLocation>
    <subcellularLocation>
        <location evidence="1">Cytoplasm</location>
    </subcellularLocation>
    <subcellularLocation>
        <location evidence="1 3">Spore membrane</location>
        <topology evidence="3">Multi-pass membrane protein</topology>
    </subcellularLocation>
    <subcellularLocation>
        <location evidence="1 3">Vacuole membrane</location>
        <topology evidence="3">Multi-pass membrane protein</topology>
    </subcellularLocation>
    <subcellularLocation>
        <location evidence="1 3">Endoplasmic reticulum membrane</location>
        <topology evidence="3">Multi-pass membrane protein</topology>
    </subcellularLocation>
    <text evidence="1">Localizes in trans to all spores within an ascus. Localization to the spore vacuole is dependent on isoform 1.</text>
</comment>
<comment type="alternative products">
    <event type="alternative initiation"/>
    <isoform>
        <id>A0A482ARC8-1</id>
        <name>1</name>
        <name evidence="6">Antidote</name>
        <name evidence="7">Suppressor</name>
        <sequence type="displayed"/>
    </isoform>
    <isoform>
        <id>A0A482ARC8-2</id>
        <name>2</name>
        <name evidence="6">Poison</name>
        <sequence type="described" ref="VSP_060934"/>
    </isoform>
</comment>
<comment type="similarity">
    <text evidence="7">Belongs to the WTF family.</text>
</comment>